<proteinExistence type="inferred from homology"/>
<accession>B1JFV4</accession>
<gene>
    <name evidence="1" type="primary">yidC</name>
    <name type="ordered locus">PputW619_5213</name>
</gene>
<evidence type="ECO:0000255" key="1">
    <source>
        <dbReference type="HAMAP-Rule" id="MF_01810"/>
    </source>
</evidence>
<evidence type="ECO:0000256" key="2">
    <source>
        <dbReference type="SAM" id="MobiDB-lite"/>
    </source>
</evidence>
<protein>
    <recommendedName>
        <fullName evidence="1">Membrane protein insertase YidC</fullName>
    </recommendedName>
    <alternativeName>
        <fullName evidence="1">Foldase YidC</fullName>
    </alternativeName>
    <alternativeName>
        <fullName evidence="1">Membrane integrase YidC</fullName>
    </alternativeName>
    <alternativeName>
        <fullName evidence="1">Membrane protein YidC</fullName>
    </alternativeName>
</protein>
<name>YIDC_PSEPW</name>
<reference key="1">
    <citation type="submission" date="2008-02" db="EMBL/GenBank/DDBJ databases">
        <title>Complete sequence of Pseudomonas putida W619.</title>
        <authorList>
            <person name="Copeland A."/>
            <person name="Lucas S."/>
            <person name="Lapidus A."/>
            <person name="Barry K."/>
            <person name="Detter J.C."/>
            <person name="Glavina del Rio T."/>
            <person name="Dalin E."/>
            <person name="Tice H."/>
            <person name="Pitluck S."/>
            <person name="Chain P."/>
            <person name="Malfatti S."/>
            <person name="Shin M."/>
            <person name="Vergez L."/>
            <person name="Schmutz J."/>
            <person name="Larimer F."/>
            <person name="Land M."/>
            <person name="Hauser L."/>
            <person name="Kyrpides N."/>
            <person name="Kim E."/>
            <person name="Taghavi S."/>
            <person name="Vangronsveld D."/>
            <person name="van der Lelie D."/>
            <person name="Richardson P."/>
        </authorList>
    </citation>
    <scope>NUCLEOTIDE SEQUENCE [LARGE SCALE GENOMIC DNA]</scope>
    <source>
        <strain>W619</strain>
    </source>
</reference>
<dbReference type="EMBL" id="CP000949">
    <property type="protein sequence ID" value="ACA75688.1"/>
    <property type="molecule type" value="Genomic_DNA"/>
</dbReference>
<dbReference type="SMR" id="B1JFV4"/>
<dbReference type="STRING" id="390235.PputW619_5213"/>
<dbReference type="KEGG" id="ppw:PputW619_5213"/>
<dbReference type="eggNOG" id="COG0706">
    <property type="taxonomic scope" value="Bacteria"/>
</dbReference>
<dbReference type="HOGENOM" id="CLU_016535_3_0_6"/>
<dbReference type="OrthoDB" id="9780552at2"/>
<dbReference type="GO" id="GO:0005886">
    <property type="term" value="C:plasma membrane"/>
    <property type="evidence" value="ECO:0007669"/>
    <property type="project" value="UniProtKB-SubCell"/>
</dbReference>
<dbReference type="GO" id="GO:0032977">
    <property type="term" value="F:membrane insertase activity"/>
    <property type="evidence" value="ECO:0007669"/>
    <property type="project" value="InterPro"/>
</dbReference>
<dbReference type="GO" id="GO:0051205">
    <property type="term" value="P:protein insertion into membrane"/>
    <property type="evidence" value="ECO:0007669"/>
    <property type="project" value="TreeGrafter"/>
</dbReference>
<dbReference type="GO" id="GO:0015031">
    <property type="term" value="P:protein transport"/>
    <property type="evidence" value="ECO:0007669"/>
    <property type="project" value="UniProtKB-KW"/>
</dbReference>
<dbReference type="CDD" id="cd20070">
    <property type="entry name" value="5TM_YidC_Alb3"/>
    <property type="match status" value="1"/>
</dbReference>
<dbReference type="CDD" id="cd19961">
    <property type="entry name" value="EcYidC-like_peri"/>
    <property type="match status" value="1"/>
</dbReference>
<dbReference type="Gene3D" id="2.70.98.90">
    <property type="match status" value="1"/>
</dbReference>
<dbReference type="HAMAP" id="MF_01810">
    <property type="entry name" value="YidC_type1"/>
    <property type="match status" value="1"/>
</dbReference>
<dbReference type="InterPro" id="IPR019998">
    <property type="entry name" value="Membr_insert_YidC"/>
</dbReference>
<dbReference type="InterPro" id="IPR028053">
    <property type="entry name" value="Membr_insert_YidC_N"/>
</dbReference>
<dbReference type="InterPro" id="IPR001708">
    <property type="entry name" value="YidC/ALB3/OXA1/COX18"/>
</dbReference>
<dbReference type="InterPro" id="IPR028055">
    <property type="entry name" value="YidC/Oxa/ALB_C"/>
</dbReference>
<dbReference type="InterPro" id="IPR047196">
    <property type="entry name" value="YidC_ALB_C"/>
</dbReference>
<dbReference type="InterPro" id="IPR038221">
    <property type="entry name" value="YidC_periplasmic_sf"/>
</dbReference>
<dbReference type="NCBIfam" id="NF002352">
    <property type="entry name" value="PRK01318.1-3"/>
    <property type="match status" value="1"/>
</dbReference>
<dbReference type="NCBIfam" id="NF002353">
    <property type="entry name" value="PRK01318.1-4"/>
    <property type="match status" value="1"/>
</dbReference>
<dbReference type="NCBIfam" id="TIGR03593">
    <property type="entry name" value="yidC_nterm"/>
    <property type="match status" value="1"/>
</dbReference>
<dbReference type="NCBIfam" id="TIGR03592">
    <property type="entry name" value="yidC_oxa1_cterm"/>
    <property type="match status" value="1"/>
</dbReference>
<dbReference type="PANTHER" id="PTHR12428:SF65">
    <property type="entry name" value="CYTOCHROME C OXIDASE ASSEMBLY PROTEIN COX18, MITOCHONDRIAL"/>
    <property type="match status" value="1"/>
</dbReference>
<dbReference type="PANTHER" id="PTHR12428">
    <property type="entry name" value="OXA1"/>
    <property type="match status" value="1"/>
</dbReference>
<dbReference type="Pfam" id="PF02096">
    <property type="entry name" value="60KD_IMP"/>
    <property type="match status" value="1"/>
</dbReference>
<dbReference type="Pfam" id="PF14849">
    <property type="entry name" value="YidC_periplas"/>
    <property type="match status" value="1"/>
</dbReference>
<dbReference type="PRINTS" id="PR00701">
    <property type="entry name" value="60KDINNERMP"/>
</dbReference>
<dbReference type="PRINTS" id="PR01900">
    <property type="entry name" value="YIDCPROTEIN"/>
</dbReference>
<organism>
    <name type="scientific">Pseudomonas putida (strain W619)</name>
    <dbReference type="NCBI Taxonomy" id="390235"/>
    <lineage>
        <taxon>Bacteria</taxon>
        <taxon>Pseudomonadati</taxon>
        <taxon>Pseudomonadota</taxon>
        <taxon>Gammaproteobacteria</taxon>
        <taxon>Pseudomonadales</taxon>
        <taxon>Pseudomonadaceae</taxon>
        <taxon>Pseudomonas</taxon>
    </lineage>
</organism>
<sequence>MDIKRTILIAALAIVSYVMVLKWNDDYGQAALPTQNTAASTVAPGLPDGVPAANNGASADVPSANAESSPAELAPVALSKDLIRVKTDVLELAIDPVGGDIVQLNLPKYPRRQDHPDIPFQLFDNGGERVYLAQSGLTGANGPDARSTGRPLYAAEQKSFQLADGQEQLVVDLKFSDNGVNYIKRFSFKRGEYDLSVSYLIDNQSGQAWSGNMFAQLKRDASGDPSSSTATGTATYLGAALWTAGEPYKKVSMKDIDKGSLKENVSGGWVAWLQHYFVTAWIPAKSDNNVVQTRKDSQGNYIIGYTGPAISVPAGGKAETSAMLYAGPKIQSKLKELSPGLELTVDYGFLWFIAQPIFWLLQHIHSLLGNWGWSIIVLTMLIKGLFFPLSAASYRSMARMRAVAPKLAALKERFGDDRQKMSQAMMELYKKEKINPLGGCLPILVQMPVFLALYWVLLESVEMRQAPWMLWITDLSIKDPFFILPIIMGATMFIQQRLNPTPPDPMQAKVMKMMPIIFTFFFLWFPAGLVLYWVVNNCLSISQQWYITRRIEAATKKAAA</sequence>
<comment type="function">
    <text evidence="1">Required for the insertion and/or proper folding and/or complex formation of integral membrane proteins into the membrane. Involved in integration of membrane proteins that insert both dependently and independently of the Sec translocase complex, as well as at least some lipoproteins. Aids folding of multispanning membrane proteins.</text>
</comment>
<comment type="subunit">
    <text evidence="1">Interacts with the Sec translocase complex via SecD. Specifically interacts with transmembrane segments of nascent integral membrane proteins during membrane integration.</text>
</comment>
<comment type="subcellular location">
    <subcellularLocation>
        <location evidence="1">Cell inner membrane</location>
        <topology evidence="1">Multi-pass membrane protein</topology>
    </subcellularLocation>
</comment>
<comment type="similarity">
    <text evidence="1">Belongs to the OXA1/ALB3/YidC family. Type 1 subfamily.</text>
</comment>
<keyword id="KW-0997">Cell inner membrane</keyword>
<keyword id="KW-1003">Cell membrane</keyword>
<keyword id="KW-0143">Chaperone</keyword>
<keyword id="KW-0472">Membrane</keyword>
<keyword id="KW-0653">Protein transport</keyword>
<keyword id="KW-0812">Transmembrane</keyword>
<keyword id="KW-1133">Transmembrane helix</keyword>
<keyword id="KW-0813">Transport</keyword>
<feature type="chain" id="PRO_1000187691" description="Membrane protein insertase YidC">
    <location>
        <begin position="1"/>
        <end position="560"/>
    </location>
</feature>
<feature type="transmembrane region" description="Helical" evidence="1">
    <location>
        <begin position="1"/>
        <end position="21"/>
    </location>
</feature>
<feature type="transmembrane region" description="Helical" evidence="1">
    <location>
        <begin position="341"/>
        <end position="361"/>
    </location>
</feature>
<feature type="transmembrane region" description="Helical" evidence="1">
    <location>
        <begin position="367"/>
        <end position="387"/>
    </location>
</feature>
<feature type="transmembrane region" description="Helical" evidence="1">
    <location>
        <begin position="437"/>
        <end position="457"/>
    </location>
</feature>
<feature type="transmembrane region" description="Helical" evidence="1">
    <location>
        <begin position="468"/>
        <end position="488"/>
    </location>
</feature>
<feature type="transmembrane region" description="Helical" evidence="1">
    <location>
        <begin position="515"/>
        <end position="535"/>
    </location>
</feature>
<feature type="region of interest" description="Disordered" evidence="2">
    <location>
        <begin position="42"/>
        <end position="66"/>
    </location>
</feature>